<feature type="chain" id="PRO_1000073191" description="Small ribosomal subunit protein uS8">
    <location>
        <begin position="1"/>
        <end position="132"/>
    </location>
</feature>
<sequence>MVMTDPIADFLTRVRNANTVYHDKVEAPASNVKKAIAEILKQEGYIKDYESVEDGKQGIIRLYLKYGANKQRVITGLKRISKPGLRVYAKKDQIPRVLGGLGIAIVSTSKGIMTDKQARQSGLGGEVICYVW</sequence>
<accession>A4J125</accession>
<organism>
    <name type="scientific">Desulforamulus reducens (strain ATCC BAA-1160 / DSM 100696 / MI-1)</name>
    <name type="common">Desulfotomaculum reducens</name>
    <dbReference type="NCBI Taxonomy" id="349161"/>
    <lineage>
        <taxon>Bacteria</taxon>
        <taxon>Bacillati</taxon>
        <taxon>Bacillota</taxon>
        <taxon>Clostridia</taxon>
        <taxon>Eubacteriales</taxon>
        <taxon>Peptococcaceae</taxon>
        <taxon>Desulforamulus</taxon>
    </lineage>
</organism>
<proteinExistence type="inferred from homology"/>
<protein>
    <recommendedName>
        <fullName evidence="1">Small ribosomal subunit protein uS8</fullName>
    </recommendedName>
    <alternativeName>
        <fullName evidence="2">30S ribosomal protein S8</fullName>
    </alternativeName>
</protein>
<keyword id="KW-1185">Reference proteome</keyword>
<keyword id="KW-0687">Ribonucleoprotein</keyword>
<keyword id="KW-0689">Ribosomal protein</keyword>
<keyword id="KW-0694">RNA-binding</keyword>
<keyword id="KW-0699">rRNA-binding</keyword>
<evidence type="ECO:0000255" key="1">
    <source>
        <dbReference type="HAMAP-Rule" id="MF_01302"/>
    </source>
</evidence>
<evidence type="ECO:0000305" key="2"/>
<name>RS8_DESRM</name>
<comment type="function">
    <text evidence="1">One of the primary rRNA binding proteins, it binds directly to 16S rRNA central domain where it helps coordinate assembly of the platform of the 30S subunit.</text>
</comment>
<comment type="subunit">
    <text evidence="1">Part of the 30S ribosomal subunit. Contacts proteins S5 and S12.</text>
</comment>
<comment type="similarity">
    <text evidence="1">Belongs to the universal ribosomal protein uS8 family.</text>
</comment>
<dbReference type="EMBL" id="CP000612">
    <property type="protein sequence ID" value="ABO48778.1"/>
    <property type="molecule type" value="Genomic_DNA"/>
</dbReference>
<dbReference type="RefSeq" id="WP_011876618.1">
    <property type="nucleotide sequence ID" value="NC_009253.1"/>
</dbReference>
<dbReference type="SMR" id="A4J125"/>
<dbReference type="STRING" id="349161.Dred_0229"/>
<dbReference type="KEGG" id="drm:Dred_0229"/>
<dbReference type="eggNOG" id="COG0096">
    <property type="taxonomic scope" value="Bacteria"/>
</dbReference>
<dbReference type="HOGENOM" id="CLU_098428_0_2_9"/>
<dbReference type="OrthoDB" id="9802617at2"/>
<dbReference type="Proteomes" id="UP000001556">
    <property type="component" value="Chromosome"/>
</dbReference>
<dbReference type="GO" id="GO:1990904">
    <property type="term" value="C:ribonucleoprotein complex"/>
    <property type="evidence" value="ECO:0007669"/>
    <property type="project" value="UniProtKB-KW"/>
</dbReference>
<dbReference type="GO" id="GO:0005840">
    <property type="term" value="C:ribosome"/>
    <property type="evidence" value="ECO:0007669"/>
    <property type="project" value="UniProtKB-KW"/>
</dbReference>
<dbReference type="GO" id="GO:0019843">
    <property type="term" value="F:rRNA binding"/>
    <property type="evidence" value="ECO:0007669"/>
    <property type="project" value="UniProtKB-UniRule"/>
</dbReference>
<dbReference type="GO" id="GO:0003735">
    <property type="term" value="F:structural constituent of ribosome"/>
    <property type="evidence" value="ECO:0007669"/>
    <property type="project" value="InterPro"/>
</dbReference>
<dbReference type="GO" id="GO:0006412">
    <property type="term" value="P:translation"/>
    <property type="evidence" value="ECO:0007669"/>
    <property type="project" value="UniProtKB-UniRule"/>
</dbReference>
<dbReference type="FunFam" id="3.30.1370.30:FF:000002">
    <property type="entry name" value="30S ribosomal protein S8"/>
    <property type="match status" value="1"/>
</dbReference>
<dbReference type="FunFam" id="3.30.1490.10:FF:000001">
    <property type="entry name" value="30S ribosomal protein S8"/>
    <property type="match status" value="1"/>
</dbReference>
<dbReference type="Gene3D" id="3.30.1370.30">
    <property type="match status" value="1"/>
</dbReference>
<dbReference type="Gene3D" id="3.30.1490.10">
    <property type="match status" value="1"/>
</dbReference>
<dbReference type="HAMAP" id="MF_01302_B">
    <property type="entry name" value="Ribosomal_uS8_B"/>
    <property type="match status" value="1"/>
</dbReference>
<dbReference type="InterPro" id="IPR000630">
    <property type="entry name" value="Ribosomal_uS8"/>
</dbReference>
<dbReference type="InterPro" id="IPR047863">
    <property type="entry name" value="Ribosomal_uS8_CS"/>
</dbReference>
<dbReference type="InterPro" id="IPR035987">
    <property type="entry name" value="Ribosomal_uS8_sf"/>
</dbReference>
<dbReference type="NCBIfam" id="NF001109">
    <property type="entry name" value="PRK00136.1"/>
    <property type="match status" value="1"/>
</dbReference>
<dbReference type="PANTHER" id="PTHR11758">
    <property type="entry name" value="40S RIBOSOMAL PROTEIN S15A"/>
    <property type="match status" value="1"/>
</dbReference>
<dbReference type="Pfam" id="PF00410">
    <property type="entry name" value="Ribosomal_S8"/>
    <property type="match status" value="1"/>
</dbReference>
<dbReference type="SUPFAM" id="SSF56047">
    <property type="entry name" value="Ribosomal protein S8"/>
    <property type="match status" value="1"/>
</dbReference>
<dbReference type="PROSITE" id="PS00053">
    <property type="entry name" value="RIBOSOMAL_S8"/>
    <property type="match status" value="1"/>
</dbReference>
<gene>
    <name evidence="1" type="primary">rpsH</name>
    <name type="ordered locus">Dred_0229</name>
</gene>
<reference key="1">
    <citation type="submission" date="2007-03" db="EMBL/GenBank/DDBJ databases">
        <title>Complete sequence of Desulfotomaculum reducens MI-1.</title>
        <authorList>
            <consortium name="US DOE Joint Genome Institute"/>
            <person name="Copeland A."/>
            <person name="Lucas S."/>
            <person name="Lapidus A."/>
            <person name="Barry K."/>
            <person name="Detter J.C."/>
            <person name="Glavina del Rio T."/>
            <person name="Hammon N."/>
            <person name="Israni S."/>
            <person name="Dalin E."/>
            <person name="Tice H."/>
            <person name="Pitluck S."/>
            <person name="Sims D."/>
            <person name="Brettin T."/>
            <person name="Bruce D."/>
            <person name="Han C."/>
            <person name="Tapia R."/>
            <person name="Schmutz J."/>
            <person name="Larimer F."/>
            <person name="Land M."/>
            <person name="Hauser L."/>
            <person name="Kyrpides N."/>
            <person name="Kim E."/>
            <person name="Tebo B.M."/>
            <person name="Richardson P."/>
        </authorList>
    </citation>
    <scope>NUCLEOTIDE SEQUENCE [LARGE SCALE GENOMIC DNA]</scope>
    <source>
        <strain>ATCC BAA-1160 / DSM 100696 / MI-1</strain>
    </source>
</reference>